<keyword id="KW-0378">Hydrolase</keyword>
<keyword id="KW-0460">Magnesium</keyword>
<keyword id="KW-0479">Metal-binding</keyword>
<keyword id="KW-0540">Nuclease</keyword>
<keyword id="KW-1185">Reference proteome</keyword>
<keyword id="KW-1277">Toxin-antitoxin system</keyword>
<reference key="1">
    <citation type="journal article" date="2002" name="J. Bacteriol.">
        <title>Whole-genome comparison of Mycobacterium tuberculosis clinical and laboratory strains.</title>
        <authorList>
            <person name="Fleischmann R.D."/>
            <person name="Alland D."/>
            <person name="Eisen J.A."/>
            <person name="Carpenter L."/>
            <person name="White O."/>
            <person name="Peterson J.D."/>
            <person name="DeBoy R.T."/>
            <person name="Dodson R.J."/>
            <person name="Gwinn M.L."/>
            <person name="Haft D.H."/>
            <person name="Hickey E.K."/>
            <person name="Kolonay J.F."/>
            <person name="Nelson W.C."/>
            <person name="Umayam L.A."/>
            <person name="Ermolaeva M.D."/>
            <person name="Salzberg S.L."/>
            <person name="Delcher A."/>
            <person name="Utterback T.R."/>
            <person name="Weidman J.F."/>
            <person name="Khouri H.M."/>
            <person name="Gill J."/>
            <person name="Mikula A."/>
            <person name="Bishai W."/>
            <person name="Jacobs W.R. Jr."/>
            <person name="Venter J.C."/>
            <person name="Fraser C.M."/>
        </authorList>
    </citation>
    <scope>NUCLEOTIDE SEQUENCE [LARGE SCALE GENOMIC DNA]</scope>
    <source>
        <strain>CDC 1551 / Oshkosh</strain>
    </source>
</reference>
<proteinExistence type="inferred from homology"/>
<name>VPC19_MYCTO</name>
<protein>
    <recommendedName>
        <fullName evidence="1">Ribonuclease VapC19</fullName>
        <shortName evidence="1">RNase VapC19</shortName>
        <ecNumber evidence="1">3.1.-.-</ecNumber>
    </recommendedName>
    <alternativeName>
        <fullName evidence="1">Toxin VapC19</fullName>
    </alternativeName>
</protein>
<feature type="chain" id="PRO_0000428579" description="Ribonuclease VapC19">
    <location>
        <begin position="1"/>
        <end position="125"/>
    </location>
</feature>
<feature type="domain" description="PINc" evidence="1">
    <location>
        <begin position="3"/>
        <end position="122"/>
    </location>
</feature>
<feature type="binding site" evidence="1">
    <location>
        <position position="5"/>
    </location>
    <ligand>
        <name>Mg(2+)</name>
        <dbReference type="ChEBI" id="CHEBI:18420"/>
    </ligand>
</feature>
<feature type="binding site" evidence="1">
    <location>
        <position position="93"/>
    </location>
    <ligand>
        <name>Mg(2+)</name>
        <dbReference type="ChEBI" id="CHEBI:18420"/>
    </ligand>
</feature>
<gene>
    <name evidence="1" type="primary">vapC19</name>
    <name type="ordered locus">MT2624</name>
</gene>
<evidence type="ECO:0000255" key="1">
    <source>
        <dbReference type="HAMAP-Rule" id="MF_00265"/>
    </source>
</evidence>
<accession>P9WF92</accession>
<accession>L0TCP7</accession>
<accession>P95005</accession>
<accession>Q7D6X9</accession>
<sequence>MKLIDTTIAVDHLRGEPAAAVLLAELINNGEEIAASELVRFELLAGVRESELAALEAFFSAVVWTLVTEDIARIGGRLARRYRSSHRGIDDVDYLIAATAIVVDADLLTTNVRHFPMFPDLQPPY</sequence>
<comment type="function">
    <text evidence="1">Toxic component of a type II toxin-antitoxin (TA) system. An RNase. Its toxic effect is neutralized by coexpression with cognate antitoxin VapB19 (By similarity).</text>
</comment>
<comment type="cofactor">
    <cofactor evidence="1">
        <name>Mg(2+)</name>
        <dbReference type="ChEBI" id="CHEBI:18420"/>
    </cofactor>
</comment>
<comment type="similarity">
    <text evidence="1">Belongs to the PINc/VapC protein family.</text>
</comment>
<organism>
    <name type="scientific">Mycobacterium tuberculosis (strain CDC 1551 / Oshkosh)</name>
    <dbReference type="NCBI Taxonomy" id="83331"/>
    <lineage>
        <taxon>Bacteria</taxon>
        <taxon>Bacillati</taxon>
        <taxon>Actinomycetota</taxon>
        <taxon>Actinomycetes</taxon>
        <taxon>Mycobacteriales</taxon>
        <taxon>Mycobacteriaceae</taxon>
        <taxon>Mycobacterium</taxon>
        <taxon>Mycobacterium tuberculosis complex</taxon>
    </lineage>
</organism>
<dbReference type="EC" id="3.1.-.-" evidence="1"/>
<dbReference type="EMBL" id="AE000516">
    <property type="protein sequence ID" value="AAK46935.1"/>
    <property type="molecule type" value="Genomic_DNA"/>
</dbReference>
<dbReference type="PIR" id="H70659">
    <property type="entry name" value="H70659"/>
</dbReference>
<dbReference type="RefSeq" id="WP_003413174.1">
    <property type="nucleotide sequence ID" value="NZ_KK341227.1"/>
</dbReference>
<dbReference type="SMR" id="P9WF92"/>
<dbReference type="KEGG" id="mtc:MT2624"/>
<dbReference type="PATRIC" id="fig|83331.31.peg.2830"/>
<dbReference type="HOGENOM" id="CLU_118482_0_1_11"/>
<dbReference type="Proteomes" id="UP000001020">
    <property type="component" value="Chromosome"/>
</dbReference>
<dbReference type="GO" id="GO:0000287">
    <property type="term" value="F:magnesium ion binding"/>
    <property type="evidence" value="ECO:0007669"/>
    <property type="project" value="UniProtKB-UniRule"/>
</dbReference>
<dbReference type="GO" id="GO:0004540">
    <property type="term" value="F:RNA nuclease activity"/>
    <property type="evidence" value="ECO:0007669"/>
    <property type="project" value="InterPro"/>
</dbReference>
<dbReference type="CDD" id="cd18741">
    <property type="entry name" value="PIN_VapC4-5_FitB-like"/>
    <property type="match status" value="1"/>
</dbReference>
<dbReference type="Gene3D" id="3.40.50.1010">
    <property type="entry name" value="5'-nuclease"/>
    <property type="match status" value="1"/>
</dbReference>
<dbReference type="HAMAP" id="MF_00265">
    <property type="entry name" value="VapC_Nob1"/>
    <property type="match status" value="1"/>
</dbReference>
<dbReference type="InterPro" id="IPR029060">
    <property type="entry name" value="PIN-like_dom_sf"/>
</dbReference>
<dbReference type="InterPro" id="IPR002716">
    <property type="entry name" value="PIN_dom"/>
</dbReference>
<dbReference type="InterPro" id="IPR050556">
    <property type="entry name" value="Type_II_TA_system_RNase"/>
</dbReference>
<dbReference type="InterPro" id="IPR022907">
    <property type="entry name" value="VapC_family"/>
</dbReference>
<dbReference type="PANTHER" id="PTHR33653">
    <property type="entry name" value="RIBONUCLEASE VAPC2"/>
    <property type="match status" value="1"/>
</dbReference>
<dbReference type="PANTHER" id="PTHR33653:SF1">
    <property type="entry name" value="RIBONUCLEASE VAPC2"/>
    <property type="match status" value="1"/>
</dbReference>
<dbReference type="Pfam" id="PF01850">
    <property type="entry name" value="PIN"/>
    <property type="match status" value="1"/>
</dbReference>
<dbReference type="SUPFAM" id="SSF88723">
    <property type="entry name" value="PIN domain-like"/>
    <property type="match status" value="1"/>
</dbReference>